<organism>
    <name type="scientific">Neisseria meningitidis serogroup B (strain ATCC BAA-335 / MC58)</name>
    <dbReference type="NCBI Taxonomy" id="122586"/>
    <lineage>
        <taxon>Bacteria</taxon>
        <taxon>Pseudomonadati</taxon>
        <taxon>Pseudomonadota</taxon>
        <taxon>Betaproteobacteria</taxon>
        <taxon>Neisseriales</taxon>
        <taxon>Neisseriaceae</taxon>
        <taxon>Neisseria</taxon>
    </lineage>
</organism>
<sequence length="335" mass="35889">MYPLARRILFALDAEKAHHFTLDALYTVYKLGLIPVTDNRTKPVKLMGMDLPNPVGLAAGLDKNGEYIDALGALGFGFIEIGTVTPNPQPGNPQPRLFRVPEHQGIINRMGFNNHGIDTMIRNIEKSKFSGVLGINIGKNAVTPIENAADDYLICLEKAYAHASYITVNISSPNTKNLRALQGGDELSALLEALKNKQAQLASVHGKYVPLAVKIAPDLDEAQIEDIAHVVKSVEMDGIIATNTTIDKSSLGSHPLAGEQGGLSGLPVHEKSNRVLKLLADHIDGKLPIIGVGGIMEGEDSADKIRLGATAVQVYSGLIYKGPALVKECLKALAR</sequence>
<name>PYRD_NEIMB</name>
<evidence type="ECO:0000255" key="1">
    <source>
        <dbReference type="HAMAP-Rule" id="MF_00225"/>
    </source>
</evidence>
<accession>Q9K1D7</accession>
<reference key="1">
    <citation type="journal article" date="2000" name="Science">
        <title>Complete genome sequence of Neisseria meningitidis serogroup B strain MC58.</title>
        <authorList>
            <person name="Tettelin H."/>
            <person name="Saunders N.J."/>
            <person name="Heidelberg J.F."/>
            <person name="Jeffries A.C."/>
            <person name="Nelson K.E."/>
            <person name="Eisen J.A."/>
            <person name="Ketchum K.A."/>
            <person name="Hood D.W."/>
            <person name="Peden J.F."/>
            <person name="Dodson R.J."/>
            <person name="Nelson W.C."/>
            <person name="Gwinn M.L."/>
            <person name="DeBoy R.T."/>
            <person name="Peterson J.D."/>
            <person name="Hickey E.K."/>
            <person name="Haft D.H."/>
            <person name="Salzberg S.L."/>
            <person name="White O."/>
            <person name="Fleischmann R.D."/>
            <person name="Dougherty B.A."/>
            <person name="Mason T.M."/>
            <person name="Ciecko A."/>
            <person name="Parksey D.S."/>
            <person name="Blair E."/>
            <person name="Cittone H."/>
            <person name="Clark E.B."/>
            <person name="Cotton M.D."/>
            <person name="Utterback T.R."/>
            <person name="Khouri H.M."/>
            <person name="Qin H."/>
            <person name="Vamathevan J.J."/>
            <person name="Gill J."/>
            <person name="Scarlato V."/>
            <person name="Masignani V."/>
            <person name="Pizza M."/>
            <person name="Grandi G."/>
            <person name="Sun L."/>
            <person name="Smith H.O."/>
            <person name="Fraser C.M."/>
            <person name="Moxon E.R."/>
            <person name="Rappuoli R."/>
            <person name="Venter J.C."/>
        </authorList>
    </citation>
    <scope>NUCLEOTIDE SEQUENCE [LARGE SCALE GENOMIC DNA]</scope>
    <source>
        <strain>ATCC BAA-335 / MC58</strain>
    </source>
</reference>
<dbReference type="EC" id="1.3.5.2" evidence="1"/>
<dbReference type="EMBL" id="AE002098">
    <property type="protein sequence ID" value="AAF40677.1"/>
    <property type="molecule type" value="Genomic_DNA"/>
</dbReference>
<dbReference type="PIR" id="G81222">
    <property type="entry name" value="G81222"/>
</dbReference>
<dbReference type="RefSeq" id="NP_273278.1">
    <property type="nucleotide sequence ID" value="NC_003112.2"/>
</dbReference>
<dbReference type="RefSeq" id="WP_002243962.1">
    <property type="nucleotide sequence ID" value="NC_003112.2"/>
</dbReference>
<dbReference type="SMR" id="Q9K1D7"/>
<dbReference type="FunCoup" id="Q9K1D7">
    <property type="interactions" value="450"/>
</dbReference>
<dbReference type="STRING" id="122586.NMB0221"/>
<dbReference type="PaxDb" id="122586-NMB0221"/>
<dbReference type="KEGG" id="nme:NMB0221"/>
<dbReference type="PATRIC" id="fig|122586.8.peg.281"/>
<dbReference type="HOGENOM" id="CLU_013640_2_0_4"/>
<dbReference type="InParanoid" id="Q9K1D7"/>
<dbReference type="OrthoDB" id="9802377at2"/>
<dbReference type="UniPathway" id="UPA00070">
    <property type="reaction ID" value="UER00946"/>
</dbReference>
<dbReference type="Proteomes" id="UP000000425">
    <property type="component" value="Chromosome"/>
</dbReference>
<dbReference type="GO" id="GO:0005737">
    <property type="term" value="C:cytoplasm"/>
    <property type="evidence" value="ECO:0007669"/>
    <property type="project" value="InterPro"/>
</dbReference>
<dbReference type="GO" id="GO:0005886">
    <property type="term" value="C:plasma membrane"/>
    <property type="evidence" value="ECO:0007669"/>
    <property type="project" value="UniProtKB-SubCell"/>
</dbReference>
<dbReference type="GO" id="GO:0106430">
    <property type="term" value="F:dihydroorotate dehydrogenase (quinone) activity"/>
    <property type="evidence" value="ECO:0007669"/>
    <property type="project" value="UniProtKB-EC"/>
</dbReference>
<dbReference type="GO" id="GO:0004152">
    <property type="term" value="F:dihydroorotate dehydrogenase activity"/>
    <property type="evidence" value="ECO:0000318"/>
    <property type="project" value="GO_Central"/>
</dbReference>
<dbReference type="GO" id="GO:0006207">
    <property type="term" value="P:'de novo' pyrimidine nucleobase biosynthetic process"/>
    <property type="evidence" value="ECO:0000318"/>
    <property type="project" value="GO_Central"/>
</dbReference>
<dbReference type="GO" id="GO:0044205">
    <property type="term" value="P:'de novo' UMP biosynthetic process"/>
    <property type="evidence" value="ECO:0007669"/>
    <property type="project" value="UniProtKB-UniRule"/>
</dbReference>
<dbReference type="GO" id="GO:0009220">
    <property type="term" value="P:pyrimidine ribonucleotide biosynthetic process"/>
    <property type="evidence" value="ECO:0000318"/>
    <property type="project" value="GO_Central"/>
</dbReference>
<dbReference type="CDD" id="cd04738">
    <property type="entry name" value="DHOD_2_like"/>
    <property type="match status" value="1"/>
</dbReference>
<dbReference type="FunFam" id="3.20.20.70:FF:000028">
    <property type="entry name" value="Dihydroorotate dehydrogenase (quinone)"/>
    <property type="match status" value="1"/>
</dbReference>
<dbReference type="Gene3D" id="3.20.20.70">
    <property type="entry name" value="Aldolase class I"/>
    <property type="match status" value="1"/>
</dbReference>
<dbReference type="HAMAP" id="MF_00225">
    <property type="entry name" value="DHO_dh_type2"/>
    <property type="match status" value="1"/>
</dbReference>
<dbReference type="InterPro" id="IPR013785">
    <property type="entry name" value="Aldolase_TIM"/>
</dbReference>
<dbReference type="InterPro" id="IPR050074">
    <property type="entry name" value="DHO_dehydrogenase"/>
</dbReference>
<dbReference type="InterPro" id="IPR012135">
    <property type="entry name" value="Dihydroorotate_DH_1_2"/>
</dbReference>
<dbReference type="InterPro" id="IPR005719">
    <property type="entry name" value="Dihydroorotate_DH_2"/>
</dbReference>
<dbReference type="InterPro" id="IPR005720">
    <property type="entry name" value="Dihydroorotate_DH_cat"/>
</dbReference>
<dbReference type="InterPro" id="IPR001295">
    <property type="entry name" value="Dihydroorotate_DH_CS"/>
</dbReference>
<dbReference type="NCBIfam" id="NF003644">
    <property type="entry name" value="PRK05286.1-1"/>
    <property type="match status" value="1"/>
</dbReference>
<dbReference type="NCBIfam" id="NF003645">
    <property type="entry name" value="PRK05286.1-2"/>
    <property type="match status" value="1"/>
</dbReference>
<dbReference type="NCBIfam" id="NF003646">
    <property type="entry name" value="PRK05286.1-4"/>
    <property type="match status" value="1"/>
</dbReference>
<dbReference type="NCBIfam" id="NF003652">
    <property type="entry name" value="PRK05286.2-5"/>
    <property type="match status" value="1"/>
</dbReference>
<dbReference type="NCBIfam" id="TIGR01036">
    <property type="entry name" value="pyrD_sub2"/>
    <property type="match status" value="1"/>
</dbReference>
<dbReference type="PANTHER" id="PTHR48109:SF4">
    <property type="entry name" value="DIHYDROOROTATE DEHYDROGENASE (QUINONE), MITOCHONDRIAL"/>
    <property type="match status" value="1"/>
</dbReference>
<dbReference type="PANTHER" id="PTHR48109">
    <property type="entry name" value="DIHYDROOROTATE DEHYDROGENASE (QUINONE), MITOCHONDRIAL-RELATED"/>
    <property type="match status" value="1"/>
</dbReference>
<dbReference type="Pfam" id="PF01180">
    <property type="entry name" value="DHO_dh"/>
    <property type="match status" value="1"/>
</dbReference>
<dbReference type="PIRSF" id="PIRSF000164">
    <property type="entry name" value="DHO_oxidase"/>
    <property type="match status" value="1"/>
</dbReference>
<dbReference type="SUPFAM" id="SSF51395">
    <property type="entry name" value="FMN-linked oxidoreductases"/>
    <property type="match status" value="1"/>
</dbReference>
<dbReference type="PROSITE" id="PS00911">
    <property type="entry name" value="DHODEHASE_1"/>
    <property type="match status" value="1"/>
</dbReference>
<feature type="chain" id="PRO_0000148460" description="Dihydroorotate dehydrogenase (quinone)">
    <location>
        <begin position="1"/>
        <end position="335"/>
    </location>
</feature>
<feature type="active site" description="Nucleophile" evidence="1">
    <location>
        <position position="172"/>
    </location>
</feature>
<feature type="binding site" evidence="1">
    <location>
        <begin position="59"/>
        <end position="63"/>
    </location>
    <ligand>
        <name>FMN</name>
        <dbReference type="ChEBI" id="CHEBI:58210"/>
    </ligand>
</feature>
<feature type="binding site" evidence="1">
    <location>
        <position position="63"/>
    </location>
    <ligand>
        <name>substrate</name>
    </ligand>
</feature>
<feature type="binding site" evidence="1">
    <location>
        <position position="83"/>
    </location>
    <ligand>
        <name>FMN</name>
        <dbReference type="ChEBI" id="CHEBI:58210"/>
    </ligand>
</feature>
<feature type="binding site" evidence="1">
    <location>
        <begin position="108"/>
        <end position="112"/>
    </location>
    <ligand>
        <name>substrate</name>
    </ligand>
</feature>
<feature type="binding site" evidence="1">
    <location>
        <position position="136"/>
    </location>
    <ligand>
        <name>FMN</name>
        <dbReference type="ChEBI" id="CHEBI:58210"/>
    </ligand>
</feature>
<feature type="binding site" evidence="1">
    <location>
        <position position="169"/>
    </location>
    <ligand>
        <name>FMN</name>
        <dbReference type="ChEBI" id="CHEBI:58210"/>
    </ligand>
</feature>
<feature type="binding site" evidence="1">
    <location>
        <position position="169"/>
    </location>
    <ligand>
        <name>substrate</name>
    </ligand>
</feature>
<feature type="binding site" evidence="1">
    <location>
        <position position="174"/>
    </location>
    <ligand>
        <name>substrate</name>
    </ligand>
</feature>
<feature type="binding site" evidence="1">
    <location>
        <position position="214"/>
    </location>
    <ligand>
        <name>FMN</name>
        <dbReference type="ChEBI" id="CHEBI:58210"/>
    </ligand>
</feature>
<feature type="binding site" evidence="1">
    <location>
        <position position="242"/>
    </location>
    <ligand>
        <name>FMN</name>
        <dbReference type="ChEBI" id="CHEBI:58210"/>
    </ligand>
</feature>
<feature type="binding site" evidence="1">
    <location>
        <begin position="243"/>
        <end position="244"/>
    </location>
    <ligand>
        <name>substrate</name>
    </ligand>
</feature>
<feature type="binding site" evidence="1">
    <location>
        <position position="265"/>
    </location>
    <ligand>
        <name>FMN</name>
        <dbReference type="ChEBI" id="CHEBI:58210"/>
    </ligand>
</feature>
<feature type="binding site" evidence="1">
    <location>
        <position position="294"/>
    </location>
    <ligand>
        <name>FMN</name>
        <dbReference type="ChEBI" id="CHEBI:58210"/>
    </ligand>
</feature>
<feature type="binding site" evidence="1">
    <location>
        <begin position="315"/>
        <end position="316"/>
    </location>
    <ligand>
        <name>FMN</name>
        <dbReference type="ChEBI" id="CHEBI:58210"/>
    </ligand>
</feature>
<protein>
    <recommendedName>
        <fullName evidence="1">Dihydroorotate dehydrogenase (quinone)</fullName>
        <ecNumber evidence="1">1.3.5.2</ecNumber>
    </recommendedName>
    <alternativeName>
        <fullName evidence="1">DHOdehase</fullName>
        <shortName evidence="1">DHOD</shortName>
        <shortName evidence="1">DHODase</shortName>
    </alternativeName>
    <alternativeName>
        <fullName evidence="1">Dihydroorotate oxidase</fullName>
    </alternativeName>
</protein>
<proteinExistence type="inferred from homology"/>
<comment type="function">
    <text evidence="1">Catalyzes the conversion of dihydroorotate to orotate with quinone as electron acceptor.</text>
</comment>
<comment type="catalytic activity">
    <reaction evidence="1">
        <text>(S)-dihydroorotate + a quinone = orotate + a quinol</text>
        <dbReference type="Rhea" id="RHEA:30187"/>
        <dbReference type="ChEBI" id="CHEBI:24646"/>
        <dbReference type="ChEBI" id="CHEBI:30839"/>
        <dbReference type="ChEBI" id="CHEBI:30864"/>
        <dbReference type="ChEBI" id="CHEBI:132124"/>
        <dbReference type="EC" id="1.3.5.2"/>
    </reaction>
</comment>
<comment type="cofactor">
    <cofactor evidence="1">
        <name>FMN</name>
        <dbReference type="ChEBI" id="CHEBI:58210"/>
    </cofactor>
    <text evidence="1">Binds 1 FMN per subunit.</text>
</comment>
<comment type="pathway">
    <text evidence="1">Pyrimidine metabolism; UMP biosynthesis via de novo pathway; orotate from (S)-dihydroorotate (quinone route): step 1/1.</text>
</comment>
<comment type="subunit">
    <text evidence="1">Monomer.</text>
</comment>
<comment type="subcellular location">
    <subcellularLocation>
        <location evidence="1">Cell membrane</location>
        <topology evidence="1">Peripheral membrane protein</topology>
    </subcellularLocation>
</comment>
<comment type="similarity">
    <text evidence="1">Belongs to the dihydroorotate dehydrogenase family. Type 2 subfamily.</text>
</comment>
<keyword id="KW-1003">Cell membrane</keyword>
<keyword id="KW-0285">Flavoprotein</keyword>
<keyword id="KW-0288">FMN</keyword>
<keyword id="KW-0472">Membrane</keyword>
<keyword id="KW-0560">Oxidoreductase</keyword>
<keyword id="KW-0665">Pyrimidine biosynthesis</keyword>
<keyword id="KW-1185">Reference proteome</keyword>
<gene>
    <name evidence="1" type="primary">pyrD</name>
    <name type="ordered locus">NMB0221</name>
</gene>